<proteinExistence type="predicted"/>
<dbReference type="EMBL" id="CP000053">
    <property type="protein sequence ID" value="AAY60862.1"/>
    <property type="molecule type" value="Genomic_DNA"/>
</dbReference>
<dbReference type="SMR" id="Q4UNJ5"/>
<dbReference type="STRING" id="315456.RF_0011"/>
<dbReference type="KEGG" id="rfe:RF_0011"/>
<dbReference type="HOGENOM" id="CLU_731338_0_0_5"/>
<dbReference type="Proteomes" id="UP000008548">
    <property type="component" value="Chromosome"/>
</dbReference>
<dbReference type="Gene3D" id="1.25.40.20">
    <property type="entry name" value="Ankyrin repeat-containing domain"/>
    <property type="match status" value="1"/>
</dbReference>
<dbReference type="InterPro" id="IPR036770">
    <property type="entry name" value="Ankyrin_rpt-contain_sf"/>
</dbReference>
<dbReference type="PANTHER" id="PTHR24121">
    <property type="entry name" value="NO MECHANORECEPTOR POTENTIAL C, ISOFORM D-RELATED"/>
    <property type="match status" value="1"/>
</dbReference>
<dbReference type="PANTHER" id="PTHR24121:SF23">
    <property type="entry name" value="NO MECHANORECEPTOR POTENTIAL C, ISOFORM H"/>
    <property type="match status" value="1"/>
</dbReference>
<dbReference type="SUPFAM" id="SSF48403">
    <property type="entry name" value="Ankyrin repeat"/>
    <property type="match status" value="1"/>
</dbReference>
<accession>Q4UNJ5</accession>
<keyword id="KW-0040">ANK repeat</keyword>
<keyword id="KW-0677">Repeat</keyword>
<reference key="1">
    <citation type="journal article" date="2005" name="PLoS Biol.">
        <title>The genome sequence of Rickettsia felis identifies the first putative conjugative plasmid in an obligate intracellular parasite.</title>
        <authorList>
            <person name="Ogata H."/>
            <person name="Renesto P."/>
            <person name="Audic S."/>
            <person name="Robert C."/>
            <person name="Blanc G."/>
            <person name="Fournier P.-E."/>
            <person name="Parinello H."/>
            <person name="Claverie J.-M."/>
            <person name="Raoult D."/>
        </authorList>
    </citation>
    <scope>NUCLEOTIDE SEQUENCE [LARGE SCALE GENOMIC DNA]</scope>
    <source>
        <strain>ATCC VR-1525 / URRWXCal2</strain>
    </source>
</reference>
<organism>
    <name type="scientific">Rickettsia felis (strain ATCC VR-1525 / URRWXCal2)</name>
    <name type="common">Rickettsia azadi</name>
    <dbReference type="NCBI Taxonomy" id="315456"/>
    <lineage>
        <taxon>Bacteria</taxon>
        <taxon>Pseudomonadati</taxon>
        <taxon>Pseudomonadota</taxon>
        <taxon>Alphaproteobacteria</taxon>
        <taxon>Rickettsiales</taxon>
        <taxon>Rickettsiaceae</taxon>
        <taxon>Rickettsieae</taxon>
        <taxon>Rickettsia</taxon>
        <taxon>spotted fever group</taxon>
    </lineage>
</organism>
<sequence>MFTSVKKFFGIHEESDEILYNQLISLLEKLTRVITAKDSDKKEVEKLIDKIKNTNLFNQSDENGNTTLILAADAGLEEACLKLIPKMSDEAINMIENIRGQPALVKAMWRDLDSVCIELIPKMSKENINAIDNCGRTLLMLAAKKGMTTVSKMFINLMPPEMIIHADNEGNTTASYADTDHAFADTTKTIKLLQEKLLKSLASFINKSFLKKDHVKKGVDNFFKIVWATKFYKKIKVNKELLASYLQEQNNDPESTNTPESMIKTMNNFIKLHLFAIAGVCKIIQPAFETSSLHLSCLPKEAICCIISHLENEKWGVDAVLLGEN</sequence>
<gene>
    <name type="ordered locus">RF_0011</name>
</gene>
<name>Y011_RICFE</name>
<protein>
    <recommendedName>
        <fullName>Putative ankyrin repeat protein RF_0011</fullName>
    </recommendedName>
</protein>
<feature type="chain" id="PRO_0000281745" description="Putative ankyrin repeat protein RF_0011">
    <location>
        <begin position="1"/>
        <end position="325"/>
    </location>
</feature>
<feature type="repeat" description="ANK 1">
    <location>
        <begin position="63"/>
        <end position="94"/>
    </location>
</feature>
<feature type="repeat" description="ANK 2">
    <location>
        <begin position="99"/>
        <end position="130"/>
    </location>
</feature>
<feature type="repeat" description="ANK 3">
    <location>
        <begin position="134"/>
        <end position="164"/>
    </location>
</feature>